<comment type="function">
    <text evidence="1">This protein is involved in the repair of mismatches in DNA. It is required for dam-dependent methyl-directed DNA mismatch repair. May act as a 'molecular matchmaker', a protein that promotes the formation of a stable complex between two or more DNA-binding proteins in an ATP-dependent manner without itself being part of a final effector complex.</text>
</comment>
<comment type="similarity">
    <text evidence="1">Belongs to the DNA mismatch repair MutL/HexB family.</text>
</comment>
<protein>
    <recommendedName>
        <fullName evidence="1">DNA mismatch repair protein MutL</fullName>
    </recommendedName>
</protein>
<feature type="chain" id="PRO_1000096682" description="DNA mismatch repair protein MutL">
    <location>
        <begin position="1"/>
        <end position="618"/>
    </location>
</feature>
<feature type="region of interest" description="Disordered" evidence="2">
    <location>
        <begin position="367"/>
        <end position="402"/>
    </location>
</feature>
<feature type="compositionally biased region" description="Low complexity" evidence="2">
    <location>
        <begin position="367"/>
        <end position="381"/>
    </location>
</feature>
<feature type="compositionally biased region" description="Gly residues" evidence="2">
    <location>
        <begin position="382"/>
        <end position="392"/>
    </location>
</feature>
<accession>B5R9B7</accession>
<evidence type="ECO:0000255" key="1">
    <source>
        <dbReference type="HAMAP-Rule" id="MF_00149"/>
    </source>
</evidence>
<evidence type="ECO:0000256" key="2">
    <source>
        <dbReference type="SAM" id="MobiDB-lite"/>
    </source>
</evidence>
<organism>
    <name type="scientific">Salmonella gallinarum (strain 287/91 / NCTC 13346)</name>
    <dbReference type="NCBI Taxonomy" id="550538"/>
    <lineage>
        <taxon>Bacteria</taxon>
        <taxon>Pseudomonadati</taxon>
        <taxon>Pseudomonadota</taxon>
        <taxon>Gammaproteobacteria</taxon>
        <taxon>Enterobacterales</taxon>
        <taxon>Enterobacteriaceae</taxon>
        <taxon>Salmonella</taxon>
    </lineage>
</organism>
<name>MUTL_SALG2</name>
<keyword id="KW-0227">DNA damage</keyword>
<keyword id="KW-0234">DNA repair</keyword>
<gene>
    <name evidence="1" type="primary">mutL</name>
    <name type="ordered locus">SG4200</name>
</gene>
<reference key="1">
    <citation type="journal article" date="2008" name="Genome Res.">
        <title>Comparative genome analysis of Salmonella enteritidis PT4 and Salmonella gallinarum 287/91 provides insights into evolutionary and host adaptation pathways.</title>
        <authorList>
            <person name="Thomson N.R."/>
            <person name="Clayton D.J."/>
            <person name="Windhorst D."/>
            <person name="Vernikos G."/>
            <person name="Davidson S."/>
            <person name="Churcher C."/>
            <person name="Quail M.A."/>
            <person name="Stevens M."/>
            <person name="Jones M.A."/>
            <person name="Watson M."/>
            <person name="Barron A."/>
            <person name="Layton A."/>
            <person name="Pickard D."/>
            <person name="Kingsley R.A."/>
            <person name="Bignell A."/>
            <person name="Clark L."/>
            <person name="Harris B."/>
            <person name="Ormond D."/>
            <person name="Abdellah Z."/>
            <person name="Brooks K."/>
            <person name="Cherevach I."/>
            <person name="Chillingworth T."/>
            <person name="Woodward J."/>
            <person name="Norberczak H."/>
            <person name="Lord A."/>
            <person name="Arrowsmith C."/>
            <person name="Jagels K."/>
            <person name="Moule S."/>
            <person name="Mungall K."/>
            <person name="Saunders M."/>
            <person name="Whitehead S."/>
            <person name="Chabalgoity J.A."/>
            <person name="Maskell D."/>
            <person name="Humphreys T."/>
            <person name="Roberts M."/>
            <person name="Barrow P.A."/>
            <person name="Dougan G."/>
            <person name="Parkhill J."/>
        </authorList>
    </citation>
    <scope>NUCLEOTIDE SEQUENCE [LARGE SCALE GENOMIC DNA]</scope>
    <source>
        <strain>287/91 / NCTC 13346</strain>
    </source>
</reference>
<dbReference type="EMBL" id="AM933173">
    <property type="protein sequence ID" value="CAR39965.1"/>
    <property type="molecule type" value="Genomic_DNA"/>
</dbReference>
<dbReference type="RefSeq" id="WP_001122551.1">
    <property type="nucleotide sequence ID" value="NC_011274.1"/>
</dbReference>
<dbReference type="SMR" id="B5R9B7"/>
<dbReference type="KEGG" id="seg:SG4200"/>
<dbReference type="HOGENOM" id="CLU_004131_5_1_6"/>
<dbReference type="Proteomes" id="UP000008321">
    <property type="component" value="Chromosome"/>
</dbReference>
<dbReference type="GO" id="GO:0032300">
    <property type="term" value="C:mismatch repair complex"/>
    <property type="evidence" value="ECO:0007669"/>
    <property type="project" value="InterPro"/>
</dbReference>
<dbReference type="GO" id="GO:0005524">
    <property type="term" value="F:ATP binding"/>
    <property type="evidence" value="ECO:0007669"/>
    <property type="project" value="InterPro"/>
</dbReference>
<dbReference type="GO" id="GO:0016887">
    <property type="term" value="F:ATP hydrolysis activity"/>
    <property type="evidence" value="ECO:0007669"/>
    <property type="project" value="InterPro"/>
</dbReference>
<dbReference type="GO" id="GO:0140664">
    <property type="term" value="F:ATP-dependent DNA damage sensor activity"/>
    <property type="evidence" value="ECO:0007669"/>
    <property type="project" value="InterPro"/>
</dbReference>
<dbReference type="GO" id="GO:0030983">
    <property type="term" value="F:mismatched DNA binding"/>
    <property type="evidence" value="ECO:0007669"/>
    <property type="project" value="InterPro"/>
</dbReference>
<dbReference type="GO" id="GO:0006298">
    <property type="term" value="P:mismatch repair"/>
    <property type="evidence" value="ECO:0007669"/>
    <property type="project" value="UniProtKB-UniRule"/>
</dbReference>
<dbReference type="CDD" id="cd16926">
    <property type="entry name" value="HATPase_MutL-MLH-PMS-like"/>
    <property type="match status" value="1"/>
</dbReference>
<dbReference type="CDD" id="cd03482">
    <property type="entry name" value="MutL_Trans_MutL"/>
    <property type="match status" value="1"/>
</dbReference>
<dbReference type="FunFam" id="3.30.230.10:FF:000013">
    <property type="entry name" value="DNA mismatch repair endonuclease MutL"/>
    <property type="match status" value="1"/>
</dbReference>
<dbReference type="FunFam" id="3.30.565.10:FF:000003">
    <property type="entry name" value="DNA mismatch repair endonuclease MutL"/>
    <property type="match status" value="1"/>
</dbReference>
<dbReference type="FunFam" id="3.30.1370.100:FF:000002">
    <property type="entry name" value="DNA mismatch repair protein MutL"/>
    <property type="match status" value="1"/>
</dbReference>
<dbReference type="Gene3D" id="3.30.230.10">
    <property type="match status" value="1"/>
</dbReference>
<dbReference type="Gene3D" id="3.30.565.10">
    <property type="entry name" value="Histidine kinase-like ATPase, C-terminal domain"/>
    <property type="match status" value="1"/>
</dbReference>
<dbReference type="Gene3D" id="3.30.1540.20">
    <property type="entry name" value="MutL, C-terminal domain, dimerisation subdomain"/>
    <property type="match status" value="1"/>
</dbReference>
<dbReference type="Gene3D" id="3.30.1370.100">
    <property type="entry name" value="MutL, C-terminal domain, regulatory subdomain"/>
    <property type="match status" value="1"/>
</dbReference>
<dbReference type="HAMAP" id="MF_00149">
    <property type="entry name" value="DNA_mis_repair"/>
    <property type="match status" value="1"/>
</dbReference>
<dbReference type="InterPro" id="IPR014762">
    <property type="entry name" value="DNA_mismatch_repair_CS"/>
</dbReference>
<dbReference type="InterPro" id="IPR020667">
    <property type="entry name" value="DNA_mismatch_repair_MutL"/>
</dbReference>
<dbReference type="InterPro" id="IPR013507">
    <property type="entry name" value="DNA_mismatch_S5_2-like"/>
</dbReference>
<dbReference type="InterPro" id="IPR036890">
    <property type="entry name" value="HATPase_C_sf"/>
</dbReference>
<dbReference type="InterPro" id="IPR002099">
    <property type="entry name" value="MutL/Mlh/PMS"/>
</dbReference>
<dbReference type="InterPro" id="IPR038973">
    <property type="entry name" value="MutL/Mlh/Pms-like"/>
</dbReference>
<dbReference type="InterPro" id="IPR014790">
    <property type="entry name" value="MutL_C"/>
</dbReference>
<dbReference type="InterPro" id="IPR042120">
    <property type="entry name" value="MutL_C_dimsub"/>
</dbReference>
<dbReference type="InterPro" id="IPR042121">
    <property type="entry name" value="MutL_C_regsub"/>
</dbReference>
<dbReference type="InterPro" id="IPR037198">
    <property type="entry name" value="MutL_C_sf"/>
</dbReference>
<dbReference type="InterPro" id="IPR020568">
    <property type="entry name" value="Ribosomal_Su5_D2-typ_SF"/>
</dbReference>
<dbReference type="InterPro" id="IPR014721">
    <property type="entry name" value="Ribsml_uS5_D2-typ_fold_subgr"/>
</dbReference>
<dbReference type="NCBIfam" id="TIGR00585">
    <property type="entry name" value="mutl"/>
    <property type="match status" value="1"/>
</dbReference>
<dbReference type="NCBIfam" id="NF000948">
    <property type="entry name" value="PRK00095.1-1"/>
    <property type="match status" value="1"/>
</dbReference>
<dbReference type="PANTHER" id="PTHR10073">
    <property type="entry name" value="DNA MISMATCH REPAIR PROTEIN MLH, PMS, MUTL"/>
    <property type="match status" value="1"/>
</dbReference>
<dbReference type="PANTHER" id="PTHR10073:SF12">
    <property type="entry name" value="DNA MISMATCH REPAIR PROTEIN MLH1"/>
    <property type="match status" value="1"/>
</dbReference>
<dbReference type="Pfam" id="PF01119">
    <property type="entry name" value="DNA_mis_repair"/>
    <property type="match status" value="1"/>
</dbReference>
<dbReference type="Pfam" id="PF13589">
    <property type="entry name" value="HATPase_c_3"/>
    <property type="match status" value="1"/>
</dbReference>
<dbReference type="Pfam" id="PF08676">
    <property type="entry name" value="MutL_C"/>
    <property type="match status" value="1"/>
</dbReference>
<dbReference type="SMART" id="SM01340">
    <property type="entry name" value="DNA_mis_repair"/>
    <property type="match status" value="1"/>
</dbReference>
<dbReference type="SMART" id="SM00853">
    <property type="entry name" value="MutL_C"/>
    <property type="match status" value="1"/>
</dbReference>
<dbReference type="SUPFAM" id="SSF55874">
    <property type="entry name" value="ATPase domain of HSP90 chaperone/DNA topoisomerase II/histidine kinase"/>
    <property type="match status" value="1"/>
</dbReference>
<dbReference type="SUPFAM" id="SSF118116">
    <property type="entry name" value="DNA mismatch repair protein MutL"/>
    <property type="match status" value="1"/>
</dbReference>
<dbReference type="SUPFAM" id="SSF54211">
    <property type="entry name" value="Ribosomal protein S5 domain 2-like"/>
    <property type="match status" value="1"/>
</dbReference>
<dbReference type="PROSITE" id="PS00058">
    <property type="entry name" value="DNA_MISMATCH_REPAIR_1"/>
    <property type="match status" value="1"/>
</dbReference>
<sequence>MPIQVLPPQLANQIAAGEVVERPASVVKELVENSLDAGATRVDIDIERGGAKLIRIRDNGCGIKKEELALALARHATSKIASLDDLEAIISLGFRGEALASISSVSRLTLTSRTAEQAEAWQAYAEGRDMDVTVKPAAHPVGTTLEVLDLFYNTPARRKFMRTEKTEFNHIDEIIRRIALARFDVTLNLSHNGKLVRQYRAVAKDGQKERRLGAICGTPFLEQALAIEWQHGDLTLRGWVADPNHTTTALTEIQYCYVNGRMMRDRLINHAIRQACEDKLGADQQPAFVLYLEIDPHQVDVNVHPAKHEVRFHQSRLVHDFIYQGVLSVLQQQTETTLPLEEIAPAPRHVPENRIAAGRNHFAVPAEPTAAREPATPRYSGGASGGNGGRQSAGGWPHAQPGYQKQQGEVYRALLQTPATSPAPEPVAPALDGHSQSFGRVLTIVGGDCALLEHAGTIQLLSLPVAERWLRQAQLTPGQSPVCAQPLLIPLRLKVSADEKAALQKAQSLLGELGIEFQSDAQHVTIRAVPLPLRQQNLQILIPELIGYLAQQTTFATVNIAQWIARNVQSEHPQWSMAQAISLLADVERLCPQLVKAPPGGLLQPVDLHSAMSALKHE</sequence>
<proteinExistence type="inferred from homology"/>